<name>RF1_METPB</name>
<sequence>MTPIPSDRLDAILARHEFVTAQLADGSADAESIVQLSRELSELDGVVAAIRHYRAAEANLAGIRALIDEPGGDPEMRALAAEEKPEAEEALEQAHRALQLMLLPKDAADEKSAILEIRAGTGGDEAALFAGDLFRMYAKYAESKGWRVEVISESEGTVGGYREVVAEVKGRSVFSRLKFESGAHRVQRVPDTETQGRIHTSAATVAVLPEAEEVDIAINEADLKIDTMRAQGAGGQHVNKTESAIRITHMPTGVVVFVQEERSQHKNRARAMALLRSKLFDAERTAKDSARAADRKAQVGSGDRSERIRTYNFPQGRVTDHRINLTLYKLEEVMAGPALDEVIDALVTEHQAELLAAEGMA</sequence>
<keyword id="KW-0963">Cytoplasm</keyword>
<keyword id="KW-0488">Methylation</keyword>
<keyword id="KW-0648">Protein biosynthesis</keyword>
<proteinExistence type="inferred from homology"/>
<comment type="function">
    <text evidence="1">Peptide chain release factor 1 directs the termination of translation in response to the peptide chain termination codons UAG and UAA.</text>
</comment>
<comment type="subcellular location">
    <subcellularLocation>
        <location evidence="1">Cytoplasm</location>
    </subcellularLocation>
</comment>
<comment type="PTM">
    <text evidence="1">Methylated by PrmC. Methylation increases the termination efficiency of RF1.</text>
</comment>
<comment type="similarity">
    <text evidence="1">Belongs to the prokaryotic/mitochondrial release factor family.</text>
</comment>
<feature type="chain" id="PRO_1000117246" description="Peptide chain release factor 1">
    <location>
        <begin position="1"/>
        <end position="361"/>
    </location>
</feature>
<feature type="region of interest" description="Disordered" evidence="2">
    <location>
        <begin position="285"/>
        <end position="313"/>
    </location>
</feature>
<feature type="compositionally biased region" description="Basic and acidic residues" evidence="2">
    <location>
        <begin position="285"/>
        <end position="309"/>
    </location>
</feature>
<feature type="modified residue" description="N5-methylglutamine" evidence="1">
    <location>
        <position position="236"/>
    </location>
</feature>
<gene>
    <name evidence="1" type="primary">prfA</name>
    <name type="ordered locus">Mpop_0894</name>
</gene>
<organism>
    <name type="scientific">Methylorubrum populi (strain ATCC BAA-705 / NCIMB 13946 / BJ001)</name>
    <name type="common">Methylobacterium populi</name>
    <dbReference type="NCBI Taxonomy" id="441620"/>
    <lineage>
        <taxon>Bacteria</taxon>
        <taxon>Pseudomonadati</taxon>
        <taxon>Pseudomonadota</taxon>
        <taxon>Alphaproteobacteria</taxon>
        <taxon>Hyphomicrobiales</taxon>
        <taxon>Methylobacteriaceae</taxon>
        <taxon>Methylorubrum</taxon>
    </lineage>
</organism>
<protein>
    <recommendedName>
        <fullName evidence="1">Peptide chain release factor 1</fullName>
        <shortName evidence="1">RF-1</shortName>
    </recommendedName>
</protein>
<dbReference type="EMBL" id="CP001029">
    <property type="protein sequence ID" value="ACB79072.1"/>
    <property type="molecule type" value="Genomic_DNA"/>
</dbReference>
<dbReference type="RefSeq" id="WP_012452828.1">
    <property type="nucleotide sequence ID" value="NC_010725.1"/>
</dbReference>
<dbReference type="SMR" id="B1Z914"/>
<dbReference type="STRING" id="441620.Mpop_0894"/>
<dbReference type="KEGG" id="mpo:Mpop_0894"/>
<dbReference type="eggNOG" id="COG0216">
    <property type="taxonomic scope" value="Bacteria"/>
</dbReference>
<dbReference type="HOGENOM" id="CLU_036856_0_1_5"/>
<dbReference type="OrthoDB" id="9806673at2"/>
<dbReference type="Proteomes" id="UP000007136">
    <property type="component" value="Chromosome"/>
</dbReference>
<dbReference type="GO" id="GO:0005737">
    <property type="term" value="C:cytoplasm"/>
    <property type="evidence" value="ECO:0007669"/>
    <property type="project" value="UniProtKB-SubCell"/>
</dbReference>
<dbReference type="GO" id="GO:0016149">
    <property type="term" value="F:translation release factor activity, codon specific"/>
    <property type="evidence" value="ECO:0007669"/>
    <property type="project" value="UniProtKB-UniRule"/>
</dbReference>
<dbReference type="FunFam" id="3.30.160.20:FF:000004">
    <property type="entry name" value="Peptide chain release factor 1"/>
    <property type="match status" value="1"/>
</dbReference>
<dbReference type="FunFam" id="3.30.70.1660:FF:000002">
    <property type="entry name" value="Peptide chain release factor 1"/>
    <property type="match status" value="1"/>
</dbReference>
<dbReference type="FunFam" id="3.30.70.1660:FF:000004">
    <property type="entry name" value="Peptide chain release factor 1"/>
    <property type="match status" value="1"/>
</dbReference>
<dbReference type="Gene3D" id="3.30.160.20">
    <property type="match status" value="1"/>
</dbReference>
<dbReference type="Gene3D" id="3.30.70.1660">
    <property type="match status" value="1"/>
</dbReference>
<dbReference type="Gene3D" id="6.10.140.1950">
    <property type="match status" value="1"/>
</dbReference>
<dbReference type="HAMAP" id="MF_00093">
    <property type="entry name" value="Rel_fac_1"/>
    <property type="match status" value="1"/>
</dbReference>
<dbReference type="InterPro" id="IPR005139">
    <property type="entry name" value="PCRF"/>
</dbReference>
<dbReference type="InterPro" id="IPR000352">
    <property type="entry name" value="Pep_chain_release_fac_I"/>
</dbReference>
<dbReference type="InterPro" id="IPR045853">
    <property type="entry name" value="Pep_chain_release_fac_I_sf"/>
</dbReference>
<dbReference type="InterPro" id="IPR050057">
    <property type="entry name" value="Prokaryotic/Mito_RF"/>
</dbReference>
<dbReference type="InterPro" id="IPR004373">
    <property type="entry name" value="RF-1"/>
</dbReference>
<dbReference type="NCBIfam" id="TIGR00019">
    <property type="entry name" value="prfA"/>
    <property type="match status" value="1"/>
</dbReference>
<dbReference type="NCBIfam" id="NF001859">
    <property type="entry name" value="PRK00591.1"/>
    <property type="match status" value="1"/>
</dbReference>
<dbReference type="PANTHER" id="PTHR43804">
    <property type="entry name" value="LD18447P"/>
    <property type="match status" value="1"/>
</dbReference>
<dbReference type="PANTHER" id="PTHR43804:SF7">
    <property type="entry name" value="LD18447P"/>
    <property type="match status" value="1"/>
</dbReference>
<dbReference type="Pfam" id="PF03462">
    <property type="entry name" value="PCRF"/>
    <property type="match status" value="1"/>
</dbReference>
<dbReference type="Pfam" id="PF00472">
    <property type="entry name" value="RF-1"/>
    <property type="match status" value="1"/>
</dbReference>
<dbReference type="SMART" id="SM00937">
    <property type="entry name" value="PCRF"/>
    <property type="match status" value="1"/>
</dbReference>
<dbReference type="SUPFAM" id="SSF75620">
    <property type="entry name" value="Release factor"/>
    <property type="match status" value="1"/>
</dbReference>
<dbReference type="PROSITE" id="PS00745">
    <property type="entry name" value="RF_PROK_I"/>
    <property type="match status" value="1"/>
</dbReference>
<reference key="1">
    <citation type="submission" date="2008-04" db="EMBL/GenBank/DDBJ databases">
        <title>Complete sequence of chromosome of Methylobacterium populi BJ001.</title>
        <authorList>
            <consortium name="US DOE Joint Genome Institute"/>
            <person name="Copeland A."/>
            <person name="Lucas S."/>
            <person name="Lapidus A."/>
            <person name="Glavina del Rio T."/>
            <person name="Dalin E."/>
            <person name="Tice H."/>
            <person name="Bruce D."/>
            <person name="Goodwin L."/>
            <person name="Pitluck S."/>
            <person name="Chertkov O."/>
            <person name="Brettin T."/>
            <person name="Detter J.C."/>
            <person name="Han C."/>
            <person name="Kuske C.R."/>
            <person name="Schmutz J."/>
            <person name="Larimer F."/>
            <person name="Land M."/>
            <person name="Hauser L."/>
            <person name="Kyrpides N."/>
            <person name="Mikhailova N."/>
            <person name="Marx C."/>
            <person name="Richardson P."/>
        </authorList>
    </citation>
    <scope>NUCLEOTIDE SEQUENCE [LARGE SCALE GENOMIC DNA]</scope>
    <source>
        <strain>ATCC BAA-705 / NCIMB 13946 / BJ001</strain>
    </source>
</reference>
<accession>B1Z914</accession>
<evidence type="ECO:0000255" key="1">
    <source>
        <dbReference type="HAMAP-Rule" id="MF_00093"/>
    </source>
</evidence>
<evidence type="ECO:0000256" key="2">
    <source>
        <dbReference type="SAM" id="MobiDB-lite"/>
    </source>
</evidence>